<proteinExistence type="inferred from homology"/>
<accession>Q6EW30</accession>
<dbReference type="EMBL" id="AJ627251">
    <property type="protein sequence ID" value="CAF28616.1"/>
    <property type="molecule type" value="Genomic_DNA"/>
</dbReference>
<dbReference type="RefSeq" id="YP_053178.1">
    <property type="nucleotide sequence ID" value="NC_006050.1"/>
</dbReference>
<dbReference type="SMR" id="Q6EW30"/>
<dbReference type="GeneID" id="2896129"/>
<dbReference type="GO" id="GO:0009507">
    <property type="term" value="C:chloroplast"/>
    <property type="evidence" value="ECO:0007669"/>
    <property type="project" value="UniProtKB-SubCell"/>
</dbReference>
<dbReference type="GO" id="GO:1990904">
    <property type="term" value="C:ribonucleoprotein complex"/>
    <property type="evidence" value="ECO:0007669"/>
    <property type="project" value="UniProtKB-KW"/>
</dbReference>
<dbReference type="GO" id="GO:0005840">
    <property type="term" value="C:ribosome"/>
    <property type="evidence" value="ECO:0007669"/>
    <property type="project" value="UniProtKB-KW"/>
</dbReference>
<dbReference type="GO" id="GO:0019843">
    <property type="term" value="F:rRNA binding"/>
    <property type="evidence" value="ECO:0007669"/>
    <property type="project" value="UniProtKB-UniRule"/>
</dbReference>
<dbReference type="GO" id="GO:0003735">
    <property type="term" value="F:structural constituent of ribosome"/>
    <property type="evidence" value="ECO:0007669"/>
    <property type="project" value="InterPro"/>
</dbReference>
<dbReference type="GO" id="GO:0000027">
    <property type="term" value="P:ribosomal large subunit assembly"/>
    <property type="evidence" value="ECO:0007669"/>
    <property type="project" value="UniProtKB-UniRule"/>
</dbReference>
<dbReference type="GO" id="GO:0006412">
    <property type="term" value="P:translation"/>
    <property type="evidence" value="ECO:0007669"/>
    <property type="project" value="InterPro"/>
</dbReference>
<dbReference type="CDD" id="cd07026">
    <property type="entry name" value="Ribosomal_L20"/>
    <property type="match status" value="1"/>
</dbReference>
<dbReference type="FunFam" id="1.10.1900.20:FF:000001">
    <property type="entry name" value="50S ribosomal protein L20"/>
    <property type="match status" value="1"/>
</dbReference>
<dbReference type="Gene3D" id="6.10.160.10">
    <property type="match status" value="1"/>
</dbReference>
<dbReference type="Gene3D" id="1.10.1900.20">
    <property type="entry name" value="Ribosomal protein L20"/>
    <property type="match status" value="1"/>
</dbReference>
<dbReference type="HAMAP" id="MF_00382">
    <property type="entry name" value="Ribosomal_bL20"/>
    <property type="match status" value="1"/>
</dbReference>
<dbReference type="InterPro" id="IPR005813">
    <property type="entry name" value="Ribosomal_bL20"/>
</dbReference>
<dbReference type="InterPro" id="IPR049946">
    <property type="entry name" value="RIBOSOMAL_L20_CS"/>
</dbReference>
<dbReference type="InterPro" id="IPR035566">
    <property type="entry name" value="Ribosomal_protein_bL20_C"/>
</dbReference>
<dbReference type="NCBIfam" id="TIGR01032">
    <property type="entry name" value="rplT_bact"/>
    <property type="match status" value="1"/>
</dbReference>
<dbReference type="PANTHER" id="PTHR10986">
    <property type="entry name" value="39S RIBOSOMAL PROTEIN L20"/>
    <property type="match status" value="1"/>
</dbReference>
<dbReference type="Pfam" id="PF00453">
    <property type="entry name" value="Ribosomal_L20"/>
    <property type="match status" value="1"/>
</dbReference>
<dbReference type="PRINTS" id="PR00062">
    <property type="entry name" value="RIBOSOMALL20"/>
</dbReference>
<dbReference type="SUPFAM" id="SSF74731">
    <property type="entry name" value="Ribosomal protein L20"/>
    <property type="match status" value="1"/>
</dbReference>
<dbReference type="PROSITE" id="PS00937">
    <property type="entry name" value="RIBOSOMAL_L20"/>
    <property type="match status" value="1"/>
</dbReference>
<geneLocation type="chloroplast"/>
<evidence type="ECO:0000255" key="1">
    <source>
        <dbReference type="HAMAP-Rule" id="MF_00382"/>
    </source>
</evidence>
<evidence type="ECO:0000305" key="2"/>
<gene>
    <name evidence="1" type="primary">rpl20</name>
</gene>
<feature type="chain" id="PRO_0000177297" description="Large ribosomal subunit protein bL20c">
    <location>
        <begin position="1"/>
        <end position="115"/>
    </location>
</feature>
<comment type="function">
    <text evidence="1">Binds directly to 23S ribosomal RNA and is necessary for the in vitro assembly process of the 50S ribosomal subunit. It is not involved in the protein synthesizing functions of that subunit.</text>
</comment>
<comment type="subcellular location">
    <subcellularLocation>
        <location>Plastid</location>
        <location>Chloroplast</location>
    </subcellularLocation>
</comment>
<comment type="similarity">
    <text evidence="1">Belongs to the bacterial ribosomal protein bL20 family.</text>
</comment>
<organism>
    <name type="scientific">Nymphaea alba</name>
    <name type="common">White water-lily</name>
    <name type="synonym">Castalia alba</name>
    <dbReference type="NCBI Taxonomy" id="34301"/>
    <lineage>
        <taxon>Eukaryota</taxon>
        <taxon>Viridiplantae</taxon>
        <taxon>Streptophyta</taxon>
        <taxon>Embryophyta</taxon>
        <taxon>Tracheophyta</taxon>
        <taxon>Spermatophyta</taxon>
        <taxon>Magnoliopsida</taxon>
        <taxon>Nymphaeales</taxon>
        <taxon>Nymphaeaceae</taxon>
        <taxon>Nymphaea</taxon>
    </lineage>
</organism>
<sequence length="115" mass="13767">MTRVRRGYIARRRRRKIRLFASSFRGAHSRLTRTATQQKIRALVSSHRGRGRQKRDFRRLWITRINAVTRENGVPYSRLIHDLRKKQLLLNRKILAQIAISNRNCLYMISNDIIK</sequence>
<reference key="1">
    <citation type="journal article" date="2004" name="Mol. Biol. Evol.">
        <title>The chloroplast genome of Nymphaea alba: whole-genome analyses and the problem of identifying the most basal angiosperm.</title>
        <authorList>
            <person name="Goremykin V.V."/>
            <person name="Hirsch-Ernst K.I."/>
            <person name="Woelfl S."/>
            <person name="Hellwig F.H."/>
        </authorList>
    </citation>
    <scope>NUCLEOTIDE SEQUENCE [LARGE SCALE GENOMIC DNA]</scope>
</reference>
<protein>
    <recommendedName>
        <fullName evidence="1">Large ribosomal subunit protein bL20c</fullName>
    </recommendedName>
    <alternativeName>
        <fullName evidence="2">50S ribosomal protein L20, chloroplastic</fullName>
    </alternativeName>
</protein>
<name>RK20_NYMAL</name>
<keyword id="KW-0150">Chloroplast</keyword>
<keyword id="KW-0934">Plastid</keyword>
<keyword id="KW-0687">Ribonucleoprotein</keyword>
<keyword id="KW-0689">Ribosomal protein</keyword>
<keyword id="KW-0694">RNA-binding</keyword>
<keyword id="KW-0699">rRNA-binding</keyword>